<gene>
    <name type="primary">GDPGP1</name>
</gene>
<reference key="1">
    <citation type="journal article" date="2005" name="BMC Genomics">
        <title>Characterization of 954 bovine full-CDS cDNA sequences.</title>
        <authorList>
            <person name="Harhay G.P."/>
            <person name="Sonstegard T.S."/>
            <person name="Keele J.W."/>
            <person name="Heaton M.P."/>
            <person name="Clawson M.L."/>
            <person name="Snelling W.M."/>
            <person name="Wiedmann R.T."/>
            <person name="Van Tassell C.P."/>
            <person name="Smith T.P.L."/>
        </authorList>
    </citation>
    <scope>NUCLEOTIDE SEQUENCE [LARGE SCALE MRNA]</scope>
</reference>
<accession>Q5E9T1</accession>
<accession>Q0V8C7</accession>
<accession>Q58D74</accession>
<comment type="function">
    <text evidence="1">Specific and highly efficient GDP-D-glucose phosphorylase regulating the levels of GDP-D-glucose in cells.</text>
</comment>
<comment type="catalytic activity">
    <reaction>
        <text>GDP-alpha-D-glucose + phosphate = alpha-D-glucose 1-phosphate + GDP + H(+)</text>
        <dbReference type="Rhea" id="RHEA:30387"/>
        <dbReference type="ChEBI" id="CHEBI:15378"/>
        <dbReference type="ChEBI" id="CHEBI:43474"/>
        <dbReference type="ChEBI" id="CHEBI:58189"/>
        <dbReference type="ChEBI" id="CHEBI:58601"/>
        <dbReference type="ChEBI" id="CHEBI:62230"/>
        <dbReference type="EC" id="2.7.7.78"/>
    </reaction>
</comment>
<comment type="subcellular location">
    <subcellularLocation>
        <location evidence="1">Cytoplasm</location>
    </subcellularLocation>
</comment>
<comment type="miscellaneous">
    <text>The orthologs in A.thaliana are GDP-L-galactose phosphorylases catalyzing the first reaction of the Smirnoff-Wheeler pathway, the major route to ascorbate biosynthesis in plants.</text>
</comment>
<comment type="similarity">
    <text evidence="2">Belongs to the GDPGP1 family.</text>
</comment>
<comment type="sequence caution" evidence="2">
    <conflict type="frameshift">
        <sequence resource="EMBL-CDS" id="AAX46570"/>
    </conflict>
</comment>
<keyword id="KW-0963">Cytoplasm</keyword>
<keyword id="KW-0344">Guanine-nucleotide releasing factor</keyword>
<keyword id="KW-0378">Hydrolase</keyword>
<keyword id="KW-0547">Nucleotide-binding</keyword>
<keyword id="KW-0548">Nucleotidyltransferase</keyword>
<keyword id="KW-1185">Reference proteome</keyword>
<keyword id="KW-0808">Transferase</keyword>
<dbReference type="EC" id="2.7.7.78"/>
<dbReference type="EMBL" id="BT020839">
    <property type="protein sequence ID" value="AAX08856.1"/>
    <property type="molecule type" value="mRNA"/>
</dbReference>
<dbReference type="EMBL" id="BT021157">
    <property type="protein sequence ID" value="AAX31339.1"/>
    <property type="molecule type" value="mRNA"/>
</dbReference>
<dbReference type="EMBL" id="BT021160">
    <property type="protein sequence ID" value="AAX31342.1"/>
    <property type="molecule type" value="mRNA"/>
</dbReference>
<dbReference type="EMBL" id="BT021723">
    <property type="protein sequence ID" value="AAX46570.1"/>
    <property type="status" value="ALT_FRAME"/>
    <property type="molecule type" value="mRNA"/>
</dbReference>
<dbReference type="EMBL" id="BT026292">
    <property type="protein sequence ID" value="ABG81448.1"/>
    <property type="molecule type" value="mRNA"/>
</dbReference>
<dbReference type="RefSeq" id="NP_001015629.1">
    <property type="nucleotide sequence ID" value="NM_001015629.1"/>
</dbReference>
<dbReference type="SMR" id="Q5E9T1"/>
<dbReference type="FunCoup" id="Q5E9T1">
    <property type="interactions" value="1051"/>
</dbReference>
<dbReference type="STRING" id="9913.ENSBTAP00000006812"/>
<dbReference type="PaxDb" id="9913-ENSBTAP00000006812"/>
<dbReference type="Ensembl" id="ENSBTAT00000006812.6">
    <property type="protein sequence ID" value="ENSBTAP00000006812.4"/>
    <property type="gene ID" value="ENSBTAG00000005174.7"/>
</dbReference>
<dbReference type="Ensembl" id="ENSBTAT00000087615.1">
    <property type="protein sequence ID" value="ENSBTAP00000097957.1"/>
    <property type="gene ID" value="ENSBTAG00000005174.7"/>
</dbReference>
<dbReference type="Ensembl" id="ENSBTAT00000101975.1">
    <property type="protein sequence ID" value="ENSBTAP00000099399.1"/>
    <property type="gene ID" value="ENSBTAG00000005174.7"/>
</dbReference>
<dbReference type="Ensembl" id="ENSBTAT00000107359.1">
    <property type="protein sequence ID" value="ENSBTAP00000095485.1"/>
    <property type="gene ID" value="ENSBTAG00000005174.7"/>
</dbReference>
<dbReference type="Ensembl" id="ENSBTAT00000129147.1">
    <property type="protein sequence ID" value="ENSBTAP00000100776.1"/>
    <property type="gene ID" value="ENSBTAG00000005174.7"/>
</dbReference>
<dbReference type="GeneID" id="522909"/>
<dbReference type="KEGG" id="bta:522909"/>
<dbReference type="CTD" id="390637"/>
<dbReference type="VEuPathDB" id="HostDB:ENSBTAG00000005174"/>
<dbReference type="VGNC" id="VGNC:29314">
    <property type="gene designation" value="GDPGP1"/>
</dbReference>
<dbReference type="eggNOG" id="KOG2720">
    <property type="taxonomic scope" value="Eukaryota"/>
</dbReference>
<dbReference type="GeneTree" id="ENSGT00390000016718"/>
<dbReference type="HOGENOM" id="CLU_041964_2_1_1"/>
<dbReference type="InParanoid" id="Q5E9T1"/>
<dbReference type="OMA" id="GIQWPRT"/>
<dbReference type="OrthoDB" id="417175at2759"/>
<dbReference type="TreeFam" id="TF313615"/>
<dbReference type="Proteomes" id="UP000009136">
    <property type="component" value="Chromosome 21"/>
</dbReference>
<dbReference type="Bgee" id="ENSBTAG00000005174">
    <property type="expression patterns" value="Expressed in oocyte and 103 other cell types or tissues"/>
</dbReference>
<dbReference type="GO" id="GO:0005737">
    <property type="term" value="C:cytoplasm"/>
    <property type="evidence" value="ECO:0000250"/>
    <property type="project" value="UniProtKB"/>
</dbReference>
<dbReference type="GO" id="GO:0080048">
    <property type="term" value="F:GDP-D-glucose phosphorylase activity"/>
    <property type="evidence" value="ECO:0000250"/>
    <property type="project" value="UniProtKB"/>
</dbReference>
<dbReference type="GO" id="GO:0005085">
    <property type="term" value="F:guanyl-nucleotide exchange factor activity"/>
    <property type="evidence" value="ECO:0007669"/>
    <property type="project" value="UniProtKB-KW"/>
</dbReference>
<dbReference type="GO" id="GO:0016787">
    <property type="term" value="F:hydrolase activity"/>
    <property type="evidence" value="ECO:0007669"/>
    <property type="project" value="UniProtKB-KW"/>
</dbReference>
<dbReference type="GO" id="GO:0000166">
    <property type="term" value="F:nucleotide binding"/>
    <property type="evidence" value="ECO:0007669"/>
    <property type="project" value="UniProtKB-KW"/>
</dbReference>
<dbReference type="GO" id="GO:0006006">
    <property type="term" value="P:glucose metabolic process"/>
    <property type="evidence" value="ECO:0000250"/>
    <property type="project" value="UniProtKB"/>
</dbReference>
<dbReference type="InterPro" id="IPR026506">
    <property type="entry name" value="GDPGP"/>
</dbReference>
<dbReference type="PANTHER" id="PTHR20884">
    <property type="entry name" value="GDP-D-GLUCOSE PHOSPHORYLASE 1"/>
    <property type="match status" value="1"/>
</dbReference>
<dbReference type="PANTHER" id="PTHR20884:SF8">
    <property type="entry name" value="GDP-D-GLUCOSE PHOSPHORYLASE 1"/>
    <property type="match status" value="1"/>
</dbReference>
<proteinExistence type="evidence at transcript level"/>
<organism>
    <name type="scientific">Bos taurus</name>
    <name type="common">Bovine</name>
    <dbReference type="NCBI Taxonomy" id="9913"/>
    <lineage>
        <taxon>Eukaryota</taxon>
        <taxon>Metazoa</taxon>
        <taxon>Chordata</taxon>
        <taxon>Craniata</taxon>
        <taxon>Vertebrata</taxon>
        <taxon>Euteleostomi</taxon>
        <taxon>Mammalia</taxon>
        <taxon>Eutheria</taxon>
        <taxon>Laurasiatheria</taxon>
        <taxon>Artiodactyla</taxon>
        <taxon>Ruminantia</taxon>
        <taxon>Pecora</taxon>
        <taxon>Bovidae</taxon>
        <taxon>Bovinae</taxon>
        <taxon>Bos</taxon>
    </lineage>
</organism>
<protein>
    <recommendedName>
        <fullName>GDP-D-glucose phosphorylase 1</fullName>
        <ecNumber>2.7.7.78</ecNumber>
    </recommendedName>
</protein>
<evidence type="ECO:0000250" key="1"/>
<evidence type="ECO:0000305" key="2"/>
<name>GDPP1_BOVIN</name>
<sequence>MAIPHASNETSYLLPPNKEDWEGQGIPDFVYEQEELMMEGVQWPRGALSLLNTPPLSHFDSALCSAWRQRMELGLFRYPLGELPTQTLPGTVGFVAQLNVERGVQRRCPQNIKSVRQEFDPEQFNFNQIRPGEVLFRLHRKQDCSGTVQQEDILVVINVSPLEWGHVLLVPEPARGLPQRLLPGALRAGVEAVLLSSHPGFRVGFNSLGGLASVNHLHLHGYYLAHRLPVEGAPSEPLDPRGRLHVLQALPAPGFLFYTSRPGPDLEALISRVCRATDYLTDCEIAHNLFVTRGAPPGKATSSSALSGVRVILWPRKPSFGIKEGEAFNVALCELAGHLPVKTAQDFSSLTEAAALALIRECLLPPAQAEDVRAALVALIAREEE</sequence>
<feature type="chain" id="PRO_0000336749" description="GDP-D-glucose phosphorylase 1">
    <location>
        <begin position="1"/>
        <end position="385"/>
    </location>
</feature>
<feature type="active site" description="Tele-GMP-histidine intermediate" evidence="1">
    <location>
        <position position="218"/>
    </location>
</feature>